<organism>
    <name type="scientific">Neurospora crassa (strain ATCC 24698 / 74-OR23-1A / CBS 708.71 / DSM 1257 / FGSC 987)</name>
    <dbReference type="NCBI Taxonomy" id="367110"/>
    <lineage>
        <taxon>Eukaryota</taxon>
        <taxon>Fungi</taxon>
        <taxon>Dikarya</taxon>
        <taxon>Ascomycota</taxon>
        <taxon>Pezizomycotina</taxon>
        <taxon>Sordariomycetes</taxon>
        <taxon>Sordariomycetidae</taxon>
        <taxon>Sordariales</taxon>
        <taxon>Sordariaceae</taxon>
        <taxon>Neurospora</taxon>
    </lineage>
</organism>
<gene>
    <name type="primary">his-7</name>
    <name type="synonym">his6</name>
    <name type="ORF">NCU00150</name>
</gene>
<comment type="catalytic activity">
    <reaction>
        <text>1-(5-phospho-beta-D-ribosyl)-5-[(5-phospho-beta-D-ribosylamino)methylideneamino]imidazole-4-carboxamide = 5-[(5-phospho-1-deoxy-D-ribulos-1-ylimino)methylamino]-1-(5-phospho-beta-D-ribosyl)imidazole-4-carboxamide</text>
        <dbReference type="Rhea" id="RHEA:15469"/>
        <dbReference type="ChEBI" id="CHEBI:58435"/>
        <dbReference type="ChEBI" id="CHEBI:58525"/>
        <dbReference type="EC" id="5.3.1.16"/>
    </reaction>
</comment>
<comment type="pathway">
    <text>Amino-acid biosynthesis; L-histidine biosynthesis; L-histidine from 5-phospho-alpha-D-ribose 1-diphosphate: step 4/9.</text>
</comment>
<comment type="subcellular location">
    <subcellularLocation>
        <location evidence="1">Cytoplasm</location>
    </subcellularLocation>
</comment>
<comment type="similarity">
    <text evidence="2">Belongs to the HisA/HisF family.</text>
</comment>
<reference key="1">
    <citation type="journal article" date="2003" name="Nature">
        <title>The genome sequence of the filamentous fungus Neurospora crassa.</title>
        <authorList>
            <person name="Galagan J.E."/>
            <person name="Calvo S.E."/>
            <person name="Borkovich K.A."/>
            <person name="Selker E.U."/>
            <person name="Read N.D."/>
            <person name="Jaffe D.B."/>
            <person name="FitzHugh W."/>
            <person name="Ma L.-J."/>
            <person name="Smirnov S."/>
            <person name="Purcell S."/>
            <person name="Rehman B."/>
            <person name="Elkins T."/>
            <person name="Engels R."/>
            <person name="Wang S."/>
            <person name="Nielsen C.B."/>
            <person name="Butler J."/>
            <person name="Endrizzi M."/>
            <person name="Qui D."/>
            <person name="Ianakiev P."/>
            <person name="Bell-Pedersen D."/>
            <person name="Nelson M.A."/>
            <person name="Werner-Washburne M."/>
            <person name="Selitrennikoff C.P."/>
            <person name="Kinsey J.A."/>
            <person name="Braun E.L."/>
            <person name="Zelter A."/>
            <person name="Schulte U."/>
            <person name="Kothe G.O."/>
            <person name="Jedd G."/>
            <person name="Mewes H.-W."/>
            <person name="Staben C."/>
            <person name="Marcotte E."/>
            <person name="Greenberg D."/>
            <person name="Roy A."/>
            <person name="Foley K."/>
            <person name="Naylor J."/>
            <person name="Stange-Thomann N."/>
            <person name="Barrett R."/>
            <person name="Gnerre S."/>
            <person name="Kamal M."/>
            <person name="Kamvysselis M."/>
            <person name="Mauceli E.W."/>
            <person name="Bielke C."/>
            <person name="Rudd S."/>
            <person name="Frishman D."/>
            <person name="Krystofova S."/>
            <person name="Rasmussen C."/>
            <person name="Metzenberg R.L."/>
            <person name="Perkins D.D."/>
            <person name="Kroken S."/>
            <person name="Cogoni C."/>
            <person name="Macino G."/>
            <person name="Catcheside D.E.A."/>
            <person name="Li W."/>
            <person name="Pratt R.J."/>
            <person name="Osmani S.A."/>
            <person name="DeSouza C.P.C."/>
            <person name="Glass N.L."/>
            <person name="Orbach M.J."/>
            <person name="Berglund J.A."/>
            <person name="Voelker R."/>
            <person name="Yarden O."/>
            <person name="Plamann M."/>
            <person name="Seiler S."/>
            <person name="Dunlap J.C."/>
            <person name="Radford A."/>
            <person name="Aramayo R."/>
            <person name="Natvig D.O."/>
            <person name="Alex L.A."/>
            <person name="Mannhaupt G."/>
            <person name="Ebbole D.J."/>
            <person name="Freitag M."/>
            <person name="Paulsen I."/>
            <person name="Sachs M.S."/>
            <person name="Lander E.S."/>
            <person name="Nusbaum C."/>
            <person name="Birren B.W."/>
        </authorList>
    </citation>
    <scope>NUCLEOTIDE SEQUENCE [LARGE SCALE GENOMIC DNA]</scope>
    <source>
        <strain>ATCC 24698 / 74-OR23-1A / CBS 708.71 / DSM 1257 / FGSC 987</strain>
    </source>
</reference>
<evidence type="ECO:0000250" key="1"/>
<evidence type="ECO:0000305" key="2"/>
<proteinExistence type="inferred from homology"/>
<dbReference type="EC" id="5.3.1.16"/>
<dbReference type="EMBL" id="CM002238">
    <property type="protein sequence ID" value="ESA43286.1"/>
    <property type="molecule type" value="Genomic_DNA"/>
</dbReference>
<dbReference type="EMBL" id="CM002238">
    <property type="protein sequence ID" value="ESA43287.1"/>
    <property type="molecule type" value="Genomic_DNA"/>
</dbReference>
<dbReference type="RefSeq" id="XP_011393768.1">
    <property type="nucleotide sequence ID" value="XM_011395466.1"/>
</dbReference>
<dbReference type="RefSeq" id="XP_011393769.1">
    <property type="nucleotide sequence ID" value="XM_011395467.1"/>
</dbReference>
<dbReference type="SMR" id="Q7RXQ8"/>
<dbReference type="FunCoup" id="Q7RXQ8">
    <property type="interactions" value="206"/>
</dbReference>
<dbReference type="STRING" id="367110.Q7RXQ8"/>
<dbReference type="PaxDb" id="5141-EFNCRP00000000077"/>
<dbReference type="EnsemblFungi" id="ESA43286">
    <property type="protein sequence ID" value="ESA43286"/>
    <property type="gene ID" value="NCU00150"/>
</dbReference>
<dbReference type="EnsemblFungi" id="ESA43287">
    <property type="protein sequence ID" value="ESA43287"/>
    <property type="gene ID" value="NCU00150"/>
</dbReference>
<dbReference type="GeneID" id="3872810"/>
<dbReference type="KEGG" id="ncr:NCU00150"/>
<dbReference type="VEuPathDB" id="FungiDB:NCU00150"/>
<dbReference type="HOGENOM" id="CLU_065050_0_0_1"/>
<dbReference type="InParanoid" id="Q7RXQ8"/>
<dbReference type="OrthoDB" id="446074at2759"/>
<dbReference type="UniPathway" id="UPA00031">
    <property type="reaction ID" value="UER00009"/>
</dbReference>
<dbReference type="Proteomes" id="UP000001805">
    <property type="component" value="Chromosome 3, Linkage Group III"/>
</dbReference>
<dbReference type="GO" id="GO:0005737">
    <property type="term" value="C:cytoplasm"/>
    <property type="evidence" value="ECO:0000318"/>
    <property type="project" value="GO_Central"/>
</dbReference>
<dbReference type="GO" id="GO:0003949">
    <property type="term" value="F:1-(5-phosphoribosyl)-5-[(5-phosphoribosylamino)methylideneamino]imidazole-4-carboxamide isomerase activity"/>
    <property type="evidence" value="ECO:0000318"/>
    <property type="project" value="GO_Central"/>
</dbReference>
<dbReference type="GO" id="GO:0000105">
    <property type="term" value="P:L-histidine biosynthetic process"/>
    <property type="evidence" value="ECO:0000318"/>
    <property type="project" value="GO_Central"/>
</dbReference>
<dbReference type="CDD" id="cd04723">
    <property type="entry name" value="HisA_HisF"/>
    <property type="match status" value="1"/>
</dbReference>
<dbReference type="FunFam" id="3.20.20.70:FF:000110">
    <property type="entry name" value="1-(5-phosphoribosyl)-5-[(5-phosphoribosylamino)methylideneamino] imidazole-4-carboxamide isomerase, chloroplastic"/>
    <property type="match status" value="1"/>
</dbReference>
<dbReference type="Gene3D" id="3.20.20.70">
    <property type="entry name" value="Aldolase class I"/>
    <property type="match status" value="1"/>
</dbReference>
<dbReference type="InterPro" id="IPR013785">
    <property type="entry name" value="Aldolase_TIM"/>
</dbReference>
<dbReference type="InterPro" id="IPR011858">
    <property type="entry name" value="His6-like_euk"/>
</dbReference>
<dbReference type="InterPro" id="IPR006062">
    <property type="entry name" value="His_biosynth"/>
</dbReference>
<dbReference type="InterPro" id="IPR044524">
    <property type="entry name" value="Isoase_HisA-like"/>
</dbReference>
<dbReference type="InterPro" id="IPR011060">
    <property type="entry name" value="RibuloseP-bd_barrel"/>
</dbReference>
<dbReference type="NCBIfam" id="TIGR02129">
    <property type="entry name" value="hisA_euk"/>
    <property type="match status" value="1"/>
</dbReference>
<dbReference type="PANTHER" id="PTHR43090">
    <property type="entry name" value="1-(5-PHOSPHORIBOSYL)-5-[(5-PHOSPHORIBOSYLAMINO)METHYLIDENEAMINO] IMIDAZOLE-4-CARBOXAMIDE ISOMERASE"/>
    <property type="match status" value="1"/>
</dbReference>
<dbReference type="PANTHER" id="PTHR43090:SF2">
    <property type="entry name" value="1-(5-PHOSPHORIBOSYL)-5-[(5-PHOSPHORIBOSYLAMINO)METHYLIDENEAMINO] IMIDAZOLE-4-CARBOXAMIDE ISOMERASE"/>
    <property type="match status" value="1"/>
</dbReference>
<dbReference type="Pfam" id="PF00977">
    <property type="entry name" value="His_biosynth"/>
    <property type="match status" value="1"/>
</dbReference>
<dbReference type="SUPFAM" id="SSF51366">
    <property type="entry name" value="Ribulose-phoshate binding barrel"/>
    <property type="match status" value="1"/>
</dbReference>
<feature type="chain" id="PRO_0000141960" description="1-(5-phosphoribosyl)-5-[(5-phosphoribosylamino)methylideneamino] imidazole-4-carboxamide isomerase">
    <location>
        <begin position="1"/>
        <end position="257"/>
    </location>
</feature>
<name>HIS4_NEUCR</name>
<keyword id="KW-0028">Amino-acid biosynthesis</keyword>
<keyword id="KW-0963">Cytoplasm</keyword>
<keyword id="KW-0368">Histidine biosynthesis</keyword>
<keyword id="KW-0413">Isomerase</keyword>
<keyword id="KW-1185">Reference proteome</keyword>
<sequence>MTRFRPCIDLHAGQVKQIVGGTLDSATSELRTNFVSPHPPAYFAKLYRDNDLSGAHVIMLGPGNKEAALESLKAWPGGLQVGGGITDANAREWVEAGAEKVIITSYLFPNGKFSQSHLDAVLAALDGDKSKLVIDLSCRRQGDDRWFVAMNKWQTITDMEVSEESIKALEPYCSEFLIHAADNEGLQKGIDEKLVQRLSEWCSIPVTYAGGGRNLEDLETVKRLSGGKVDLTIGSALDCFGGKGVTLQECVEWNRRQ</sequence>
<protein>
    <recommendedName>
        <fullName>1-(5-phosphoribosyl)-5-[(5-phosphoribosylamino)methylideneamino] imidazole-4-carboxamide isomerase</fullName>
        <ecNumber>5.3.1.16</ecNumber>
    </recommendedName>
    <alternativeName>
        <fullName>5-proFAR isomerase</fullName>
    </alternativeName>
    <alternativeName>
        <fullName>Phosphoribosylformimino-5-aminoimidazole carboxamide ribotide isomerase</fullName>
    </alternativeName>
</protein>
<accession>Q7RXQ8</accession>
<accession>U9W340</accession>